<evidence type="ECO:0000255" key="1">
    <source>
        <dbReference type="HAMAP-Rule" id="MF_00160"/>
    </source>
</evidence>
<gene>
    <name evidence="1" type="primary">serC</name>
    <name type="ordered locus">EC55989_0952</name>
</gene>
<proteinExistence type="inferred from homology"/>
<sequence length="362" mass="39840">MAQIFNFSSGPAMLPAEVLKQAQQELRDWNGLGTSVMEVSHRGKEFIQVAEEAEKDFRDLLNVPSNYKVLFCHGGGRGQFAAVPLNILGDKTTADYVDAGYWAASAIKEAKKYCTPNVFDAKVTVDGLRAVKPMREWQLSDNAAYMHYCPNETIDGIAIDETPDFGKDVVVAADFSSTILSRPIDVSRYGVIYAGAQKNIGPAGLTIVIVREDLLGKANIACPSILDYSILNDNGSMFNTPPTFAWYLSGLVFKWLKANGGVAEMDKINQQKAELLYGVIDNSDFYRNDVAKANRSRMNVPFQLADSALDKLFLEESFAAGLHALKGHRVVGGMRASIYNAMPLEGVKALTDFMVEFERRHG</sequence>
<organism>
    <name type="scientific">Escherichia coli (strain 55989 / EAEC)</name>
    <dbReference type="NCBI Taxonomy" id="585055"/>
    <lineage>
        <taxon>Bacteria</taxon>
        <taxon>Pseudomonadati</taxon>
        <taxon>Pseudomonadota</taxon>
        <taxon>Gammaproteobacteria</taxon>
        <taxon>Enterobacterales</taxon>
        <taxon>Enterobacteriaceae</taxon>
        <taxon>Escherichia</taxon>
    </lineage>
</organism>
<dbReference type="EC" id="2.6.1.52" evidence="1"/>
<dbReference type="EMBL" id="CU928145">
    <property type="protein sequence ID" value="CAU96816.1"/>
    <property type="molecule type" value="Genomic_DNA"/>
</dbReference>
<dbReference type="RefSeq" id="WP_000057149.1">
    <property type="nucleotide sequence ID" value="NC_011748.1"/>
</dbReference>
<dbReference type="SMR" id="B7LD99"/>
<dbReference type="GeneID" id="93776511"/>
<dbReference type="KEGG" id="eck:EC55989_0952"/>
<dbReference type="HOGENOM" id="CLU_034866_0_2_6"/>
<dbReference type="UniPathway" id="UPA00135">
    <property type="reaction ID" value="UER00197"/>
</dbReference>
<dbReference type="UniPathway" id="UPA00244">
    <property type="reaction ID" value="UER00311"/>
</dbReference>
<dbReference type="Proteomes" id="UP000000746">
    <property type="component" value="Chromosome"/>
</dbReference>
<dbReference type="GO" id="GO:0005737">
    <property type="term" value="C:cytoplasm"/>
    <property type="evidence" value="ECO:0007669"/>
    <property type="project" value="UniProtKB-SubCell"/>
</dbReference>
<dbReference type="GO" id="GO:0004648">
    <property type="term" value="F:O-phospho-L-serine:2-oxoglutarate aminotransferase activity"/>
    <property type="evidence" value="ECO:0007669"/>
    <property type="project" value="UniProtKB-UniRule"/>
</dbReference>
<dbReference type="GO" id="GO:0030170">
    <property type="term" value="F:pyridoxal phosphate binding"/>
    <property type="evidence" value="ECO:0007669"/>
    <property type="project" value="UniProtKB-UniRule"/>
</dbReference>
<dbReference type="GO" id="GO:0006564">
    <property type="term" value="P:L-serine biosynthetic process"/>
    <property type="evidence" value="ECO:0007669"/>
    <property type="project" value="UniProtKB-UniRule"/>
</dbReference>
<dbReference type="GO" id="GO:0008615">
    <property type="term" value="P:pyridoxine biosynthetic process"/>
    <property type="evidence" value="ECO:0007669"/>
    <property type="project" value="UniProtKB-UniRule"/>
</dbReference>
<dbReference type="CDD" id="cd00611">
    <property type="entry name" value="PSAT_like"/>
    <property type="match status" value="1"/>
</dbReference>
<dbReference type="FunFam" id="3.40.640.10:FF:000010">
    <property type="entry name" value="Phosphoserine aminotransferase"/>
    <property type="match status" value="1"/>
</dbReference>
<dbReference type="FunFam" id="3.90.1150.10:FF:000006">
    <property type="entry name" value="Phosphoserine aminotransferase"/>
    <property type="match status" value="1"/>
</dbReference>
<dbReference type="Gene3D" id="3.90.1150.10">
    <property type="entry name" value="Aspartate Aminotransferase, domain 1"/>
    <property type="match status" value="1"/>
</dbReference>
<dbReference type="Gene3D" id="3.40.640.10">
    <property type="entry name" value="Type I PLP-dependent aspartate aminotransferase-like (Major domain)"/>
    <property type="match status" value="1"/>
</dbReference>
<dbReference type="HAMAP" id="MF_00160">
    <property type="entry name" value="SerC_aminotrans_5"/>
    <property type="match status" value="1"/>
</dbReference>
<dbReference type="InterPro" id="IPR000192">
    <property type="entry name" value="Aminotrans_V_dom"/>
</dbReference>
<dbReference type="InterPro" id="IPR020578">
    <property type="entry name" value="Aminotrans_V_PyrdxlP_BS"/>
</dbReference>
<dbReference type="InterPro" id="IPR022278">
    <property type="entry name" value="Pser_aminoTfrase"/>
</dbReference>
<dbReference type="InterPro" id="IPR015424">
    <property type="entry name" value="PyrdxlP-dep_Trfase"/>
</dbReference>
<dbReference type="InterPro" id="IPR015421">
    <property type="entry name" value="PyrdxlP-dep_Trfase_major"/>
</dbReference>
<dbReference type="InterPro" id="IPR015422">
    <property type="entry name" value="PyrdxlP-dep_Trfase_small"/>
</dbReference>
<dbReference type="NCBIfam" id="NF003764">
    <property type="entry name" value="PRK05355.1"/>
    <property type="match status" value="1"/>
</dbReference>
<dbReference type="NCBIfam" id="TIGR01364">
    <property type="entry name" value="serC_1"/>
    <property type="match status" value="1"/>
</dbReference>
<dbReference type="PANTHER" id="PTHR43247">
    <property type="entry name" value="PHOSPHOSERINE AMINOTRANSFERASE"/>
    <property type="match status" value="1"/>
</dbReference>
<dbReference type="PANTHER" id="PTHR43247:SF1">
    <property type="entry name" value="PHOSPHOSERINE AMINOTRANSFERASE"/>
    <property type="match status" value="1"/>
</dbReference>
<dbReference type="Pfam" id="PF00266">
    <property type="entry name" value="Aminotran_5"/>
    <property type="match status" value="1"/>
</dbReference>
<dbReference type="PIRSF" id="PIRSF000525">
    <property type="entry name" value="SerC"/>
    <property type="match status" value="1"/>
</dbReference>
<dbReference type="SUPFAM" id="SSF53383">
    <property type="entry name" value="PLP-dependent transferases"/>
    <property type="match status" value="1"/>
</dbReference>
<dbReference type="PROSITE" id="PS00595">
    <property type="entry name" value="AA_TRANSFER_CLASS_5"/>
    <property type="match status" value="1"/>
</dbReference>
<reference key="1">
    <citation type="journal article" date="2009" name="PLoS Genet.">
        <title>Organised genome dynamics in the Escherichia coli species results in highly diverse adaptive paths.</title>
        <authorList>
            <person name="Touchon M."/>
            <person name="Hoede C."/>
            <person name="Tenaillon O."/>
            <person name="Barbe V."/>
            <person name="Baeriswyl S."/>
            <person name="Bidet P."/>
            <person name="Bingen E."/>
            <person name="Bonacorsi S."/>
            <person name="Bouchier C."/>
            <person name="Bouvet O."/>
            <person name="Calteau A."/>
            <person name="Chiapello H."/>
            <person name="Clermont O."/>
            <person name="Cruveiller S."/>
            <person name="Danchin A."/>
            <person name="Diard M."/>
            <person name="Dossat C."/>
            <person name="Karoui M.E."/>
            <person name="Frapy E."/>
            <person name="Garry L."/>
            <person name="Ghigo J.M."/>
            <person name="Gilles A.M."/>
            <person name="Johnson J."/>
            <person name="Le Bouguenec C."/>
            <person name="Lescat M."/>
            <person name="Mangenot S."/>
            <person name="Martinez-Jehanne V."/>
            <person name="Matic I."/>
            <person name="Nassif X."/>
            <person name="Oztas S."/>
            <person name="Petit M.A."/>
            <person name="Pichon C."/>
            <person name="Rouy Z."/>
            <person name="Ruf C.S."/>
            <person name="Schneider D."/>
            <person name="Tourret J."/>
            <person name="Vacherie B."/>
            <person name="Vallenet D."/>
            <person name="Medigue C."/>
            <person name="Rocha E.P.C."/>
            <person name="Denamur E."/>
        </authorList>
    </citation>
    <scope>NUCLEOTIDE SEQUENCE [LARGE SCALE GENOMIC DNA]</scope>
    <source>
        <strain>55989 / EAEC</strain>
    </source>
</reference>
<comment type="function">
    <text evidence="1">Catalyzes the reversible conversion of 3-phosphohydroxypyruvate to phosphoserine and of 3-hydroxy-2-oxo-4-phosphonooxybutanoate to phosphohydroxythreonine.</text>
</comment>
<comment type="catalytic activity">
    <reaction evidence="1">
        <text>O-phospho-L-serine + 2-oxoglutarate = 3-phosphooxypyruvate + L-glutamate</text>
        <dbReference type="Rhea" id="RHEA:14329"/>
        <dbReference type="ChEBI" id="CHEBI:16810"/>
        <dbReference type="ChEBI" id="CHEBI:18110"/>
        <dbReference type="ChEBI" id="CHEBI:29985"/>
        <dbReference type="ChEBI" id="CHEBI:57524"/>
        <dbReference type="EC" id="2.6.1.52"/>
    </reaction>
</comment>
<comment type="catalytic activity">
    <reaction evidence="1">
        <text>4-(phosphooxy)-L-threonine + 2-oxoglutarate = (R)-3-hydroxy-2-oxo-4-phosphooxybutanoate + L-glutamate</text>
        <dbReference type="Rhea" id="RHEA:16573"/>
        <dbReference type="ChEBI" id="CHEBI:16810"/>
        <dbReference type="ChEBI" id="CHEBI:29985"/>
        <dbReference type="ChEBI" id="CHEBI:58452"/>
        <dbReference type="ChEBI" id="CHEBI:58538"/>
        <dbReference type="EC" id="2.6.1.52"/>
    </reaction>
</comment>
<comment type="cofactor">
    <cofactor evidence="1">
        <name>pyridoxal 5'-phosphate</name>
        <dbReference type="ChEBI" id="CHEBI:597326"/>
    </cofactor>
    <text evidence="1">Binds 1 pyridoxal phosphate per subunit.</text>
</comment>
<comment type="pathway">
    <text evidence="1">Amino-acid biosynthesis; L-serine biosynthesis; L-serine from 3-phospho-D-glycerate: step 2/3.</text>
</comment>
<comment type="pathway">
    <text evidence="1">Cofactor biosynthesis; pyridoxine 5'-phosphate biosynthesis; pyridoxine 5'-phosphate from D-erythrose 4-phosphate: step 3/5.</text>
</comment>
<comment type="subunit">
    <text evidence="1">Homodimer.</text>
</comment>
<comment type="subcellular location">
    <subcellularLocation>
        <location evidence="1">Cytoplasm</location>
    </subcellularLocation>
</comment>
<comment type="similarity">
    <text evidence="1">Belongs to the class-V pyridoxal-phosphate-dependent aminotransferase family. SerC subfamily.</text>
</comment>
<keyword id="KW-0028">Amino-acid biosynthesis</keyword>
<keyword id="KW-0032">Aminotransferase</keyword>
<keyword id="KW-0963">Cytoplasm</keyword>
<keyword id="KW-0663">Pyridoxal phosphate</keyword>
<keyword id="KW-0664">Pyridoxine biosynthesis</keyword>
<keyword id="KW-1185">Reference proteome</keyword>
<keyword id="KW-0718">Serine biosynthesis</keyword>
<keyword id="KW-0808">Transferase</keyword>
<feature type="chain" id="PRO_1000203521" description="Phosphoserine aminotransferase">
    <location>
        <begin position="1"/>
        <end position="362"/>
    </location>
</feature>
<feature type="binding site" evidence="1">
    <location>
        <position position="9"/>
    </location>
    <ligand>
        <name>L-glutamate</name>
        <dbReference type="ChEBI" id="CHEBI:29985"/>
    </ligand>
</feature>
<feature type="binding site" evidence="1">
    <location>
        <position position="42"/>
    </location>
    <ligand>
        <name>L-glutamate</name>
        <dbReference type="ChEBI" id="CHEBI:29985"/>
    </ligand>
</feature>
<feature type="binding site" evidence="1">
    <location>
        <begin position="76"/>
        <end position="77"/>
    </location>
    <ligand>
        <name>pyridoxal 5'-phosphate</name>
        <dbReference type="ChEBI" id="CHEBI:597326"/>
    </ligand>
</feature>
<feature type="binding site" evidence="1">
    <location>
        <position position="102"/>
    </location>
    <ligand>
        <name>pyridoxal 5'-phosphate</name>
        <dbReference type="ChEBI" id="CHEBI:597326"/>
    </ligand>
</feature>
<feature type="binding site" evidence="1">
    <location>
        <position position="153"/>
    </location>
    <ligand>
        <name>pyridoxal 5'-phosphate</name>
        <dbReference type="ChEBI" id="CHEBI:597326"/>
    </ligand>
</feature>
<feature type="binding site" evidence="1">
    <location>
        <position position="174"/>
    </location>
    <ligand>
        <name>pyridoxal 5'-phosphate</name>
        <dbReference type="ChEBI" id="CHEBI:597326"/>
    </ligand>
</feature>
<feature type="binding site" evidence="1">
    <location>
        <position position="197"/>
    </location>
    <ligand>
        <name>pyridoxal 5'-phosphate</name>
        <dbReference type="ChEBI" id="CHEBI:597326"/>
    </ligand>
</feature>
<feature type="binding site" evidence="1">
    <location>
        <begin position="239"/>
        <end position="240"/>
    </location>
    <ligand>
        <name>pyridoxal 5'-phosphate</name>
        <dbReference type="ChEBI" id="CHEBI:597326"/>
    </ligand>
</feature>
<feature type="modified residue" description="N6-(pyridoxal phosphate)lysine" evidence="1">
    <location>
        <position position="198"/>
    </location>
</feature>
<accession>B7LD99</accession>
<protein>
    <recommendedName>
        <fullName evidence="1">Phosphoserine aminotransferase</fullName>
        <ecNumber evidence="1">2.6.1.52</ecNumber>
    </recommendedName>
    <alternativeName>
        <fullName evidence="1">Phosphohydroxythreonine aminotransferase</fullName>
        <shortName evidence="1">PSAT</shortName>
    </alternativeName>
</protein>
<name>SERC_ECO55</name>